<protein>
    <recommendedName>
        <fullName evidence="1">NADH-quinone oxidoreductase subunit D</fullName>
        <ecNumber evidence="1">7.1.1.-</ecNumber>
    </recommendedName>
    <alternativeName>
        <fullName evidence="1">NADH dehydrogenase I subunit D</fullName>
    </alternativeName>
    <alternativeName>
        <fullName evidence="1">NDH-1 subunit D</fullName>
    </alternativeName>
</protein>
<sequence>MTEHSIRNFSINFGPQHPAAHGVLRLVLELDGEIVERVDPHIGLLHRGTEKLIEVKTYLQATPYFDRLDYVAPMNQEHAFCLAVEKLLGIEVPRRAKLIRTLFCEIGRLLSHLLNVTTQAMDVGALTPPLWGFEEREKLMIFYERASGARLHANYFRPGGVHQDLPPGLIDDIEAFCDPFLQVVDDLDALVIGNRIFKQRNVDIGIVTVDAAMAWGFSGVMLRGSGIPWDLRRAQPYEAYEEMEFDVPVGKNGDTYDRQVIRMEEMRQSVRIMKQCLAKLRAPDGQGPVTTQDGKVAPPSRREMKRSMEALIHHFKLYTEGFHVPAGEVYAAVEAPKGEFGVYLVADGTNKPYRCKIRAPGFAHLQAMDWMCRGHMLADVSCILGTLDIVFGEVDR</sequence>
<comment type="function">
    <text evidence="1">NDH-1 shuttles electrons from NADH, via FMN and iron-sulfur (Fe-S) centers, to quinones in the respiratory chain. The immediate electron acceptor for the enzyme in this species is believed to be ubiquinone. Couples the redox reaction to proton translocation (for every two electrons transferred, four hydrogen ions are translocated across the cytoplasmic membrane), and thus conserves the redox energy in a proton gradient.</text>
</comment>
<comment type="catalytic activity">
    <reaction evidence="1">
        <text>a quinone + NADH + 5 H(+)(in) = a quinol + NAD(+) + 4 H(+)(out)</text>
        <dbReference type="Rhea" id="RHEA:57888"/>
        <dbReference type="ChEBI" id="CHEBI:15378"/>
        <dbReference type="ChEBI" id="CHEBI:24646"/>
        <dbReference type="ChEBI" id="CHEBI:57540"/>
        <dbReference type="ChEBI" id="CHEBI:57945"/>
        <dbReference type="ChEBI" id="CHEBI:132124"/>
    </reaction>
</comment>
<comment type="subunit">
    <text evidence="1">NDH-1 is composed of 14 different subunits. Subunits NuoB, C, D, E, F, and G constitute the peripheral sector of the complex.</text>
</comment>
<comment type="subcellular location">
    <subcellularLocation>
        <location evidence="1">Cell inner membrane</location>
        <topology evidence="1">Peripheral membrane protein</topology>
        <orientation evidence="1">Cytoplasmic side</orientation>
    </subcellularLocation>
</comment>
<comment type="similarity">
    <text evidence="1">Belongs to the complex I 49 kDa subunit family.</text>
</comment>
<keyword id="KW-0997">Cell inner membrane</keyword>
<keyword id="KW-1003">Cell membrane</keyword>
<keyword id="KW-0472">Membrane</keyword>
<keyword id="KW-0520">NAD</keyword>
<keyword id="KW-0874">Quinone</keyword>
<keyword id="KW-1278">Translocase</keyword>
<keyword id="KW-0813">Transport</keyword>
<keyword id="KW-0830">Ubiquinone</keyword>
<name>NUOD_METS4</name>
<organism>
    <name type="scientific">Methylobacterium sp. (strain 4-46)</name>
    <dbReference type="NCBI Taxonomy" id="426117"/>
    <lineage>
        <taxon>Bacteria</taxon>
        <taxon>Pseudomonadati</taxon>
        <taxon>Pseudomonadota</taxon>
        <taxon>Alphaproteobacteria</taxon>
        <taxon>Hyphomicrobiales</taxon>
        <taxon>Methylobacteriaceae</taxon>
        <taxon>Methylobacterium</taxon>
    </lineage>
</organism>
<gene>
    <name evidence="1" type="primary">nuoD</name>
    <name type="ordered locus">M446_4393</name>
</gene>
<proteinExistence type="inferred from homology"/>
<accession>B0ULK7</accession>
<reference key="1">
    <citation type="submission" date="2008-02" db="EMBL/GenBank/DDBJ databases">
        <title>Complete sequence of chromosome of Methylobacterium sp. 4-46.</title>
        <authorList>
            <consortium name="US DOE Joint Genome Institute"/>
            <person name="Copeland A."/>
            <person name="Lucas S."/>
            <person name="Lapidus A."/>
            <person name="Glavina del Rio T."/>
            <person name="Dalin E."/>
            <person name="Tice H."/>
            <person name="Bruce D."/>
            <person name="Goodwin L."/>
            <person name="Pitluck S."/>
            <person name="Chertkov O."/>
            <person name="Brettin T."/>
            <person name="Detter J.C."/>
            <person name="Han C."/>
            <person name="Kuske C.R."/>
            <person name="Schmutz J."/>
            <person name="Larimer F."/>
            <person name="Land M."/>
            <person name="Hauser L."/>
            <person name="Kyrpides N."/>
            <person name="Ivanova N."/>
            <person name="Marx C.J."/>
            <person name="Richardson P."/>
        </authorList>
    </citation>
    <scope>NUCLEOTIDE SEQUENCE [LARGE SCALE GENOMIC DNA]</scope>
    <source>
        <strain>4-46</strain>
    </source>
</reference>
<evidence type="ECO:0000255" key="1">
    <source>
        <dbReference type="HAMAP-Rule" id="MF_01358"/>
    </source>
</evidence>
<dbReference type="EC" id="7.1.1.-" evidence="1"/>
<dbReference type="EMBL" id="CP000943">
    <property type="protein sequence ID" value="ACA18735.1"/>
    <property type="molecule type" value="Genomic_DNA"/>
</dbReference>
<dbReference type="RefSeq" id="WP_012334124.1">
    <property type="nucleotide sequence ID" value="NC_010511.1"/>
</dbReference>
<dbReference type="SMR" id="B0ULK7"/>
<dbReference type="STRING" id="426117.M446_4393"/>
<dbReference type="KEGG" id="met:M446_4393"/>
<dbReference type="eggNOG" id="COG0649">
    <property type="taxonomic scope" value="Bacteria"/>
</dbReference>
<dbReference type="HOGENOM" id="CLU_015134_1_1_5"/>
<dbReference type="GO" id="GO:0005886">
    <property type="term" value="C:plasma membrane"/>
    <property type="evidence" value="ECO:0007669"/>
    <property type="project" value="UniProtKB-SubCell"/>
</dbReference>
<dbReference type="GO" id="GO:0051287">
    <property type="term" value="F:NAD binding"/>
    <property type="evidence" value="ECO:0007669"/>
    <property type="project" value="InterPro"/>
</dbReference>
<dbReference type="GO" id="GO:0050136">
    <property type="term" value="F:NADH:ubiquinone reductase (non-electrogenic) activity"/>
    <property type="evidence" value="ECO:0007669"/>
    <property type="project" value="UniProtKB-UniRule"/>
</dbReference>
<dbReference type="GO" id="GO:0048038">
    <property type="term" value="F:quinone binding"/>
    <property type="evidence" value="ECO:0007669"/>
    <property type="project" value="UniProtKB-KW"/>
</dbReference>
<dbReference type="FunFam" id="1.10.645.10:FF:000005">
    <property type="entry name" value="NADH-quinone oxidoreductase subunit D"/>
    <property type="match status" value="1"/>
</dbReference>
<dbReference type="Gene3D" id="1.10.645.10">
    <property type="entry name" value="Cytochrome-c3 Hydrogenase, chain B"/>
    <property type="match status" value="1"/>
</dbReference>
<dbReference type="HAMAP" id="MF_01358">
    <property type="entry name" value="NDH1_NuoD"/>
    <property type="match status" value="1"/>
</dbReference>
<dbReference type="InterPro" id="IPR001135">
    <property type="entry name" value="NADH_Q_OxRdtase_suD"/>
</dbReference>
<dbReference type="InterPro" id="IPR014029">
    <property type="entry name" value="NADH_UbQ_OxRdtase_49kDa_CS"/>
</dbReference>
<dbReference type="InterPro" id="IPR022885">
    <property type="entry name" value="NDH1_su_D/H"/>
</dbReference>
<dbReference type="InterPro" id="IPR029014">
    <property type="entry name" value="NiFe-Hase_large"/>
</dbReference>
<dbReference type="NCBIfam" id="TIGR01962">
    <property type="entry name" value="NuoD"/>
    <property type="match status" value="1"/>
</dbReference>
<dbReference type="NCBIfam" id="NF004739">
    <property type="entry name" value="PRK06075.1"/>
    <property type="match status" value="1"/>
</dbReference>
<dbReference type="PANTHER" id="PTHR11993:SF10">
    <property type="entry name" value="NADH DEHYDROGENASE [UBIQUINONE] IRON-SULFUR PROTEIN 2, MITOCHONDRIAL"/>
    <property type="match status" value="1"/>
</dbReference>
<dbReference type="PANTHER" id="PTHR11993">
    <property type="entry name" value="NADH-UBIQUINONE OXIDOREDUCTASE 49 KDA SUBUNIT"/>
    <property type="match status" value="1"/>
</dbReference>
<dbReference type="Pfam" id="PF00346">
    <property type="entry name" value="Complex1_49kDa"/>
    <property type="match status" value="1"/>
</dbReference>
<dbReference type="SUPFAM" id="SSF56762">
    <property type="entry name" value="HydB/Nqo4-like"/>
    <property type="match status" value="1"/>
</dbReference>
<dbReference type="PROSITE" id="PS00535">
    <property type="entry name" value="COMPLEX1_49K"/>
    <property type="match status" value="1"/>
</dbReference>
<feature type="chain" id="PRO_0000357851" description="NADH-quinone oxidoreductase subunit D">
    <location>
        <begin position="1"/>
        <end position="396"/>
    </location>
</feature>